<keyword id="KW-0903">Direct protein sequencing</keyword>
<keyword id="KW-1015">Disulfide bond</keyword>
<dbReference type="PIR" id="JS0301">
    <property type="entry name" value="JS0301"/>
</dbReference>
<dbReference type="SMR" id="P15444"/>
<dbReference type="GO" id="GO:0005615">
    <property type="term" value="C:extracellular space"/>
    <property type="evidence" value="ECO:0007669"/>
    <property type="project" value="TreeGrafter"/>
</dbReference>
<dbReference type="GO" id="GO:0030141">
    <property type="term" value="C:secretory granule"/>
    <property type="evidence" value="ECO:0007669"/>
    <property type="project" value="TreeGrafter"/>
</dbReference>
<dbReference type="GO" id="GO:0005185">
    <property type="term" value="F:neurohypophyseal hormone activity"/>
    <property type="evidence" value="ECO:0007669"/>
    <property type="project" value="InterPro"/>
</dbReference>
<dbReference type="GO" id="GO:0031894">
    <property type="term" value="F:V1A vasopressin receptor binding"/>
    <property type="evidence" value="ECO:0007669"/>
    <property type="project" value="TreeGrafter"/>
</dbReference>
<dbReference type="FunFam" id="2.60.9.10:FF:000001">
    <property type="entry name" value="oxytocin-neurophysin 1"/>
    <property type="match status" value="1"/>
</dbReference>
<dbReference type="Gene3D" id="2.60.9.10">
    <property type="entry name" value="Neurohypophysial hormone domain"/>
    <property type="match status" value="1"/>
</dbReference>
<dbReference type="InterPro" id="IPR000981">
    <property type="entry name" value="Neurhyp_horm"/>
</dbReference>
<dbReference type="InterPro" id="IPR036387">
    <property type="entry name" value="Neurhyp_horm_dom_sf"/>
</dbReference>
<dbReference type="PANTHER" id="PTHR11681">
    <property type="entry name" value="NEUROPHYSIN"/>
    <property type="match status" value="1"/>
</dbReference>
<dbReference type="PANTHER" id="PTHR11681:SF9">
    <property type="entry name" value="VASOPRESSIN-NEUROPHYSIN 2-COPEPTIN"/>
    <property type="match status" value="1"/>
</dbReference>
<dbReference type="Pfam" id="PF00184">
    <property type="entry name" value="Hormone_5"/>
    <property type="match status" value="1"/>
</dbReference>
<dbReference type="PRINTS" id="PR00831">
    <property type="entry name" value="NEUROPHYSIN"/>
</dbReference>
<dbReference type="SMART" id="SM00003">
    <property type="entry name" value="NH"/>
    <property type="match status" value="1"/>
</dbReference>
<dbReference type="SUPFAM" id="SSF49606">
    <property type="entry name" value="Neurophysin II"/>
    <property type="match status" value="1"/>
</dbReference>
<name>NEU1_STRCA</name>
<feature type="chain" id="PRO_0000160935" description="Neurophysin 1">
    <location>
        <begin position="1"/>
        <end position="93"/>
    </location>
</feature>
<feature type="disulfide bond" evidence="1">
    <location>
        <begin position="10"/>
        <end position="54"/>
    </location>
</feature>
<feature type="disulfide bond" evidence="1">
    <location>
        <begin position="13"/>
        <end position="27"/>
    </location>
</feature>
<feature type="disulfide bond" evidence="1">
    <location>
        <begin position="21"/>
        <end position="44"/>
    </location>
</feature>
<feature type="disulfide bond" evidence="1">
    <location>
        <begin position="28"/>
        <end position="34"/>
    </location>
</feature>
<feature type="disulfide bond" evidence="1">
    <location>
        <begin position="61"/>
        <end position="74"/>
    </location>
</feature>
<feature type="disulfide bond" evidence="1">
    <location>
        <begin position="68"/>
        <end position="86"/>
    </location>
</feature>
<feature type="disulfide bond" evidence="1">
    <location>
        <begin position="75"/>
        <end position="80"/>
    </location>
</feature>
<sequence length="93" mass="9971">AVLDMDIRKCMPCGPRNKGHCFGPNICCGEELGCYFGTSETLRCQEENFLPTPCESGRKPCGNNEGSCAASGICCSNEGCMVDSSCDQEVMFP</sequence>
<proteinExistence type="evidence at protein level"/>
<comment type="function">
    <text>Neurophysin 1 specifically binds oxytocin.</text>
</comment>
<comment type="similarity">
    <text evidence="2">Belongs to the vasopressin/oxytocin family.</text>
</comment>
<protein>
    <recommendedName>
        <fullName>Neurophysin 1</fullName>
    </recommendedName>
</protein>
<organism>
    <name type="scientific">Struthio camelus</name>
    <name type="common">Common ostrich</name>
    <dbReference type="NCBI Taxonomy" id="8801"/>
    <lineage>
        <taxon>Eukaryota</taxon>
        <taxon>Metazoa</taxon>
        <taxon>Chordata</taxon>
        <taxon>Craniata</taxon>
        <taxon>Vertebrata</taxon>
        <taxon>Euteleostomi</taxon>
        <taxon>Archelosauria</taxon>
        <taxon>Archosauria</taxon>
        <taxon>Dinosauria</taxon>
        <taxon>Saurischia</taxon>
        <taxon>Theropoda</taxon>
        <taxon>Coelurosauria</taxon>
        <taxon>Aves</taxon>
        <taxon>Palaeognathae</taxon>
        <taxon>Struthioniformes</taxon>
        <taxon>Struthionidae</taxon>
        <taxon>Struthio</taxon>
    </lineage>
</organism>
<evidence type="ECO:0000250" key="1">
    <source>
        <dbReference type="UniProtKB" id="P01175"/>
    </source>
</evidence>
<evidence type="ECO:0000305" key="2"/>
<reference key="1">
    <citation type="journal article" date="1987" name="Int. J. Pept. Protein Res.">
        <title>Complete amino acid sequence of a VLDV-type neurophysin from ostrich differs markedly from known mammalian neurophysins.</title>
        <authorList>
            <person name="Lazure C."/>
            <person name="Saayman H.S."/>
            <person name="Naude R.J."/>
            <person name="Oelofsen W."/>
            <person name="Chretien M."/>
        </authorList>
    </citation>
    <scope>PROTEIN SEQUENCE</scope>
</reference>
<accession>P15444</accession>